<proteinExistence type="inferred from homology"/>
<keyword id="KW-1185">Reference proteome</keyword>
<keyword id="KW-0687">Ribonucleoprotein</keyword>
<keyword id="KW-0689">Ribosomal protein</keyword>
<keyword id="KW-0694">RNA-binding</keyword>
<keyword id="KW-0699">rRNA-binding</keyword>
<gene>
    <name evidence="1" type="primary">rpsS</name>
    <name type="ordered locus">DIP0477</name>
</gene>
<name>RS19_CORDI</name>
<dbReference type="EMBL" id="BX248355">
    <property type="protein sequence ID" value="CAE48982.1"/>
    <property type="molecule type" value="Genomic_DNA"/>
</dbReference>
<dbReference type="RefSeq" id="WP_004566728.1">
    <property type="nucleotide sequence ID" value="NC_002935.2"/>
</dbReference>
<dbReference type="SMR" id="Q6NJD1"/>
<dbReference type="STRING" id="257309.DIP0477"/>
<dbReference type="GeneID" id="97331080"/>
<dbReference type="KEGG" id="cdi:DIP0477"/>
<dbReference type="HOGENOM" id="CLU_144911_0_1_11"/>
<dbReference type="Proteomes" id="UP000002198">
    <property type="component" value="Chromosome"/>
</dbReference>
<dbReference type="GO" id="GO:0005737">
    <property type="term" value="C:cytoplasm"/>
    <property type="evidence" value="ECO:0007669"/>
    <property type="project" value="UniProtKB-ARBA"/>
</dbReference>
<dbReference type="GO" id="GO:0015935">
    <property type="term" value="C:small ribosomal subunit"/>
    <property type="evidence" value="ECO:0007669"/>
    <property type="project" value="InterPro"/>
</dbReference>
<dbReference type="GO" id="GO:0019843">
    <property type="term" value="F:rRNA binding"/>
    <property type="evidence" value="ECO:0007669"/>
    <property type="project" value="UniProtKB-UniRule"/>
</dbReference>
<dbReference type="GO" id="GO:0003735">
    <property type="term" value="F:structural constituent of ribosome"/>
    <property type="evidence" value="ECO:0007669"/>
    <property type="project" value="InterPro"/>
</dbReference>
<dbReference type="GO" id="GO:0000028">
    <property type="term" value="P:ribosomal small subunit assembly"/>
    <property type="evidence" value="ECO:0007669"/>
    <property type="project" value="TreeGrafter"/>
</dbReference>
<dbReference type="GO" id="GO:0006412">
    <property type="term" value="P:translation"/>
    <property type="evidence" value="ECO:0007669"/>
    <property type="project" value="UniProtKB-UniRule"/>
</dbReference>
<dbReference type="FunFam" id="3.30.860.10:FF:000001">
    <property type="entry name" value="30S ribosomal protein S19"/>
    <property type="match status" value="1"/>
</dbReference>
<dbReference type="Gene3D" id="3.30.860.10">
    <property type="entry name" value="30s Ribosomal Protein S19, Chain A"/>
    <property type="match status" value="1"/>
</dbReference>
<dbReference type="HAMAP" id="MF_00531">
    <property type="entry name" value="Ribosomal_uS19"/>
    <property type="match status" value="1"/>
</dbReference>
<dbReference type="InterPro" id="IPR002222">
    <property type="entry name" value="Ribosomal_uS19"/>
</dbReference>
<dbReference type="InterPro" id="IPR005732">
    <property type="entry name" value="Ribosomal_uS19_bac-type"/>
</dbReference>
<dbReference type="InterPro" id="IPR020934">
    <property type="entry name" value="Ribosomal_uS19_CS"/>
</dbReference>
<dbReference type="InterPro" id="IPR023575">
    <property type="entry name" value="Ribosomal_uS19_SF"/>
</dbReference>
<dbReference type="NCBIfam" id="TIGR01050">
    <property type="entry name" value="rpsS_bact"/>
    <property type="match status" value="1"/>
</dbReference>
<dbReference type="PANTHER" id="PTHR11880">
    <property type="entry name" value="RIBOSOMAL PROTEIN S19P FAMILY MEMBER"/>
    <property type="match status" value="1"/>
</dbReference>
<dbReference type="PANTHER" id="PTHR11880:SF8">
    <property type="entry name" value="SMALL RIBOSOMAL SUBUNIT PROTEIN US19M"/>
    <property type="match status" value="1"/>
</dbReference>
<dbReference type="Pfam" id="PF00203">
    <property type="entry name" value="Ribosomal_S19"/>
    <property type="match status" value="1"/>
</dbReference>
<dbReference type="PIRSF" id="PIRSF002144">
    <property type="entry name" value="Ribosomal_S19"/>
    <property type="match status" value="1"/>
</dbReference>
<dbReference type="PRINTS" id="PR00975">
    <property type="entry name" value="RIBOSOMALS19"/>
</dbReference>
<dbReference type="SUPFAM" id="SSF54570">
    <property type="entry name" value="Ribosomal protein S19"/>
    <property type="match status" value="1"/>
</dbReference>
<dbReference type="PROSITE" id="PS00323">
    <property type="entry name" value="RIBOSOMAL_S19"/>
    <property type="match status" value="1"/>
</dbReference>
<sequence>MPRSLKKGPFVDEHLLNKVDAQNEKGTKQVIKTWSRRSTILPDFIGHTFAVHDGRKHVPVFVDDSMVGHKLGEFAPTKTFKGHIKDDKKGRR</sequence>
<feature type="chain" id="PRO_0000129812" description="Small ribosomal subunit protein uS19">
    <location>
        <begin position="1"/>
        <end position="92"/>
    </location>
</feature>
<accession>Q6NJD1</accession>
<reference key="1">
    <citation type="journal article" date="2003" name="Nucleic Acids Res.">
        <title>The complete genome sequence and analysis of Corynebacterium diphtheriae NCTC13129.</title>
        <authorList>
            <person name="Cerdeno-Tarraga A.-M."/>
            <person name="Efstratiou A."/>
            <person name="Dover L.G."/>
            <person name="Holden M.T.G."/>
            <person name="Pallen M.J."/>
            <person name="Bentley S.D."/>
            <person name="Besra G.S."/>
            <person name="Churcher C.M."/>
            <person name="James K.D."/>
            <person name="De Zoysa A."/>
            <person name="Chillingworth T."/>
            <person name="Cronin A."/>
            <person name="Dowd L."/>
            <person name="Feltwell T."/>
            <person name="Hamlin N."/>
            <person name="Holroyd S."/>
            <person name="Jagels K."/>
            <person name="Moule S."/>
            <person name="Quail M.A."/>
            <person name="Rabbinowitsch E."/>
            <person name="Rutherford K.M."/>
            <person name="Thomson N.R."/>
            <person name="Unwin L."/>
            <person name="Whitehead S."/>
            <person name="Barrell B.G."/>
            <person name="Parkhill J."/>
        </authorList>
    </citation>
    <scope>NUCLEOTIDE SEQUENCE [LARGE SCALE GENOMIC DNA]</scope>
    <source>
        <strain>ATCC 700971 / NCTC 13129 / Biotype gravis</strain>
    </source>
</reference>
<protein>
    <recommendedName>
        <fullName evidence="1">Small ribosomal subunit protein uS19</fullName>
    </recommendedName>
    <alternativeName>
        <fullName evidence="2">30S ribosomal protein S19</fullName>
    </alternativeName>
</protein>
<evidence type="ECO:0000255" key="1">
    <source>
        <dbReference type="HAMAP-Rule" id="MF_00531"/>
    </source>
</evidence>
<evidence type="ECO:0000305" key="2"/>
<comment type="function">
    <text evidence="1">Protein S19 forms a complex with S13 that binds strongly to the 16S ribosomal RNA.</text>
</comment>
<comment type="similarity">
    <text evidence="1">Belongs to the universal ribosomal protein uS19 family.</text>
</comment>
<organism>
    <name type="scientific">Corynebacterium diphtheriae (strain ATCC 700971 / NCTC 13129 / Biotype gravis)</name>
    <dbReference type="NCBI Taxonomy" id="257309"/>
    <lineage>
        <taxon>Bacteria</taxon>
        <taxon>Bacillati</taxon>
        <taxon>Actinomycetota</taxon>
        <taxon>Actinomycetes</taxon>
        <taxon>Mycobacteriales</taxon>
        <taxon>Corynebacteriaceae</taxon>
        <taxon>Corynebacterium</taxon>
    </lineage>
</organism>